<reference key="1">
    <citation type="submission" date="2003-10" db="EMBL/GenBank/DDBJ databases">
        <title>The complete genome sequence of the alkaliphilic Bacillus clausii KSM-K16.</title>
        <authorList>
            <person name="Takaki Y."/>
            <person name="Kageyama Y."/>
            <person name="Shimamura S."/>
            <person name="Suzuki H."/>
            <person name="Nishi S."/>
            <person name="Hatada Y."/>
            <person name="Kawai S."/>
            <person name="Ito S."/>
            <person name="Horikoshi K."/>
        </authorList>
    </citation>
    <scope>NUCLEOTIDE SEQUENCE [LARGE SCALE GENOMIC DNA]</scope>
    <source>
        <strain>KSM-K16</strain>
    </source>
</reference>
<organism>
    <name type="scientific">Shouchella clausii (strain KSM-K16)</name>
    <name type="common">Alkalihalobacillus clausii</name>
    <dbReference type="NCBI Taxonomy" id="66692"/>
    <lineage>
        <taxon>Bacteria</taxon>
        <taxon>Bacillati</taxon>
        <taxon>Bacillota</taxon>
        <taxon>Bacilli</taxon>
        <taxon>Bacillales</taxon>
        <taxon>Bacillaceae</taxon>
        <taxon>Shouchella</taxon>
    </lineage>
</organism>
<dbReference type="EC" id="4.1.1.11" evidence="1"/>
<dbReference type="EMBL" id="AP006627">
    <property type="protein sequence ID" value="BAD64600.1"/>
    <property type="molecule type" value="Genomic_DNA"/>
</dbReference>
<dbReference type="RefSeq" id="WP_011246908.1">
    <property type="nucleotide sequence ID" value="NC_006582.1"/>
</dbReference>
<dbReference type="SMR" id="Q5WGA5"/>
<dbReference type="STRING" id="66692.ABC2065"/>
<dbReference type="KEGG" id="bcl:ABC2065"/>
<dbReference type="eggNOG" id="COG0853">
    <property type="taxonomic scope" value="Bacteria"/>
</dbReference>
<dbReference type="HOGENOM" id="CLU_115305_2_0_9"/>
<dbReference type="OrthoDB" id="9803983at2"/>
<dbReference type="UniPathway" id="UPA00028">
    <property type="reaction ID" value="UER00002"/>
</dbReference>
<dbReference type="Proteomes" id="UP000001168">
    <property type="component" value="Chromosome"/>
</dbReference>
<dbReference type="GO" id="GO:0005829">
    <property type="term" value="C:cytosol"/>
    <property type="evidence" value="ECO:0007669"/>
    <property type="project" value="TreeGrafter"/>
</dbReference>
<dbReference type="GO" id="GO:0004068">
    <property type="term" value="F:aspartate 1-decarboxylase activity"/>
    <property type="evidence" value="ECO:0007669"/>
    <property type="project" value="UniProtKB-UniRule"/>
</dbReference>
<dbReference type="GO" id="GO:0006523">
    <property type="term" value="P:alanine biosynthetic process"/>
    <property type="evidence" value="ECO:0007669"/>
    <property type="project" value="InterPro"/>
</dbReference>
<dbReference type="GO" id="GO:0015940">
    <property type="term" value="P:pantothenate biosynthetic process"/>
    <property type="evidence" value="ECO:0007669"/>
    <property type="project" value="UniProtKB-UniRule"/>
</dbReference>
<dbReference type="CDD" id="cd06919">
    <property type="entry name" value="Asp_decarbox"/>
    <property type="match status" value="1"/>
</dbReference>
<dbReference type="Gene3D" id="2.40.40.20">
    <property type="match status" value="1"/>
</dbReference>
<dbReference type="HAMAP" id="MF_00446">
    <property type="entry name" value="PanD"/>
    <property type="match status" value="1"/>
</dbReference>
<dbReference type="InterPro" id="IPR009010">
    <property type="entry name" value="Asp_de-COase-like_dom_sf"/>
</dbReference>
<dbReference type="InterPro" id="IPR003190">
    <property type="entry name" value="Asp_decarbox"/>
</dbReference>
<dbReference type="NCBIfam" id="TIGR00223">
    <property type="entry name" value="panD"/>
    <property type="match status" value="1"/>
</dbReference>
<dbReference type="PANTHER" id="PTHR21012">
    <property type="entry name" value="ASPARTATE 1-DECARBOXYLASE"/>
    <property type="match status" value="1"/>
</dbReference>
<dbReference type="PANTHER" id="PTHR21012:SF0">
    <property type="entry name" value="ASPARTATE 1-DECARBOXYLASE"/>
    <property type="match status" value="1"/>
</dbReference>
<dbReference type="Pfam" id="PF02261">
    <property type="entry name" value="Asp_decarbox"/>
    <property type="match status" value="1"/>
</dbReference>
<dbReference type="PIRSF" id="PIRSF006246">
    <property type="entry name" value="Asp_decarbox"/>
    <property type="match status" value="1"/>
</dbReference>
<dbReference type="SUPFAM" id="SSF50692">
    <property type="entry name" value="ADC-like"/>
    <property type="match status" value="1"/>
</dbReference>
<feature type="chain" id="PRO_0000023033" description="Aspartate 1-decarboxylase beta chain" evidence="1">
    <location>
        <begin position="1"/>
        <end position="24"/>
    </location>
</feature>
<feature type="chain" id="PRO_0000023034" description="Aspartate 1-decarboxylase alpha chain" evidence="1">
    <location>
        <begin position="25"/>
        <end position="127"/>
    </location>
</feature>
<feature type="active site" description="Schiff-base intermediate with substrate; via pyruvic acid" evidence="1">
    <location>
        <position position="25"/>
    </location>
</feature>
<feature type="active site" description="Proton donor" evidence="1">
    <location>
        <position position="58"/>
    </location>
</feature>
<feature type="binding site" evidence="1">
    <location>
        <position position="57"/>
    </location>
    <ligand>
        <name>substrate</name>
    </ligand>
</feature>
<feature type="binding site" evidence="1">
    <location>
        <begin position="73"/>
        <end position="75"/>
    </location>
    <ligand>
        <name>substrate</name>
    </ligand>
</feature>
<feature type="modified residue" description="Pyruvic acid (Ser)" evidence="1">
    <location>
        <position position="25"/>
    </location>
</feature>
<name>PAND_SHOC1</name>
<evidence type="ECO:0000255" key="1">
    <source>
        <dbReference type="HAMAP-Rule" id="MF_00446"/>
    </source>
</evidence>
<keyword id="KW-0068">Autocatalytic cleavage</keyword>
<keyword id="KW-0963">Cytoplasm</keyword>
<keyword id="KW-0210">Decarboxylase</keyword>
<keyword id="KW-0456">Lyase</keyword>
<keyword id="KW-0566">Pantothenate biosynthesis</keyword>
<keyword id="KW-0670">Pyruvate</keyword>
<keyword id="KW-1185">Reference proteome</keyword>
<keyword id="KW-0704">Schiff base</keyword>
<keyword id="KW-0865">Zymogen</keyword>
<sequence>MYRTMMKAKLHRARVTESNLNYVGSITIDEDLMDAVDLLENEKVQIVNNNNGERFETYVIKGPRGEGGICLNGAAARKVQPGDVVIILSYAMMENAEALAHQPKVAILDENNRIVEMLGTEPASTVR</sequence>
<protein>
    <recommendedName>
        <fullName evidence="1">Aspartate 1-decarboxylase</fullName>
        <ecNumber evidence="1">4.1.1.11</ecNumber>
    </recommendedName>
    <alternativeName>
        <fullName evidence="1">Aspartate alpha-decarboxylase</fullName>
    </alternativeName>
    <component>
        <recommendedName>
            <fullName evidence="1">Aspartate 1-decarboxylase beta chain</fullName>
        </recommendedName>
    </component>
    <component>
        <recommendedName>
            <fullName evidence="1">Aspartate 1-decarboxylase alpha chain</fullName>
        </recommendedName>
    </component>
</protein>
<gene>
    <name evidence="1" type="primary">panD</name>
    <name type="ordered locus">ABC2065</name>
</gene>
<proteinExistence type="inferred from homology"/>
<accession>Q5WGA5</accession>
<comment type="function">
    <text evidence="1">Catalyzes the pyruvoyl-dependent decarboxylation of aspartate to produce beta-alanine.</text>
</comment>
<comment type="catalytic activity">
    <reaction evidence="1">
        <text>L-aspartate + H(+) = beta-alanine + CO2</text>
        <dbReference type="Rhea" id="RHEA:19497"/>
        <dbReference type="ChEBI" id="CHEBI:15378"/>
        <dbReference type="ChEBI" id="CHEBI:16526"/>
        <dbReference type="ChEBI" id="CHEBI:29991"/>
        <dbReference type="ChEBI" id="CHEBI:57966"/>
        <dbReference type="EC" id="4.1.1.11"/>
    </reaction>
</comment>
<comment type="cofactor">
    <cofactor evidence="1">
        <name>pyruvate</name>
        <dbReference type="ChEBI" id="CHEBI:15361"/>
    </cofactor>
    <text evidence="1">Binds 1 pyruvoyl group covalently per subunit.</text>
</comment>
<comment type="pathway">
    <text evidence="1">Cofactor biosynthesis; (R)-pantothenate biosynthesis; beta-alanine from L-aspartate: step 1/1.</text>
</comment>
<comment type="subunit">
    <text evidence="1">Heterooctamer of four alpha and four beta subunits.</text>
</comment>
<comment type="subcellular location">
    <subcellularLocation>
        <location evidence="1">Cytoplasm</location>
    </subcellularLocation>
</comment>
<comment type="PTM">
    <text evidence="1">Is synthesized initially as an inactive proenzyme, which is activated by self-cleavage at a specific serine bond to produce a beta-subunit with a hydroxyl group at its C-terminus and an alpha-subunit with a pyruvoyl group at its N-terminus.</text>
</comment>
<comment type="similarity">
    <text evidence="1">Belongs to the PanD family.</text>
</comment>